<feature type="chain" id="PRO_0000340209" description="Sulfate adenylyltransferase subunit 2">
    <location>
        <begin position="1"/>
        <end position="308"/>
    </location>
</feature>
<feature type="region of interest" description="Disordered" evidence="2">
    <location>
        <begin position="286"/>
        <end position="308"/>
    </location>
</feature>
<keyword id="KW-0067">ATP-binding</keyword>
<keyword id="KW-0547">Nucleotide-binding</keyword>
<keyword id="KW-0548">Nucleotidyltransferase</keyword>
<keyword id="KW-1185">Reference proteome</keyword>
<keyword id="KW-0808">Transferase</keyword>
<proteinExistence type="inferred from homology"/>
<accession>Q5YUA1</accession>
<protein>
    <recommendedName>
        <fullName evidence="1">Sulfate adenylyltransferase subunit 2</fullName>
        <ecNumber evidence="1">2.7.7.4</ecNumber>
    </recommendedName>
    <alternativeName>
        <fullName evidence="1">ATP-sulfurylase small subunit</fullName>
    </alternativeName>
    <alternativeName>
        <fullName evidence="1">Sulfate adenylate transferase</fullName>
        <shortName evidence="1">SAT</shortName>
    </alternativeName>
</protein>
<name>CYSD_NOCFA</name>
<dbReference type="EC" id="2.7.7.4" evidence="1"/>
<dbReference type="EMBL" id="AP006618">
    <property type="protein sequence ID" value="BAD58240.1"/>
    <property type="molecule type" value="Genomic_DNA"/>
</dbReference>
<dbReference type="RefSeq" id="WP_011209925.1">
    <property type="nucleotide sequence ID" value="NC_006361.1"/>
</dbReference>
<dbReference type="SMR" id="Q5YUA1"/>
<dbReference type="STRING" id="247156.NFA_33930"/>
<dbReference type="GeneID" id="61134100"/>
<dbReference type="KEGG" id="nfa:NFA_33930"/>
<dbReference type="eggNOG" id="COG0175">
    <property type="taxonomic scope" value="Bacteria"/>
</dbReference>
<dbReference type="HOGENOM" id="CLU_043026_0_0_11"/>
<dbReference type="OrthoDB" id="9772604at2"/>
<dbReference type="UniPathway" id="UPA00140">
    <property type="reaction ID" value="UER00204"/>
</dbReference>
<dbReference type="Proteomes" id="UP000006820">
    <property type="component" value="Chromosome"/>
</dbReference>
<dbReference type="GO" id="GO:0005524">
    <property type="term" value="F:ATP binding"/>
    <property type="evidence" value="ECO:0007669"/>
    <property type="project" value="UniProtKB-KW"/>
</dbReference>
<dbReference type="GO" id="GO:0004781">
    <property type="term" value="F:sulfate adenylyltransferase (ATP) activity"/>
    <property type="evidence" value="ECO:0007669"/>
    <property type="project" value="UniProtKB-UniRule"/>
</dbReference>
<dbReference type="GO" id="GO:0070814">
    <property type="term" value="P:hydrogen sulfide biosynthetic process"/>
    <property type="evidence" value="ECO:0007669"/>
    <property type="project" value="UniProtKB-UniRule"/>
</dbReference>
<dbReference type="GO" id="GO:0000103">
    <property type="term" value="P:sulfate assimilation"/>
    <property type="evidence" value="ECO:0007669"/>
    <property type="project" value="UniProtKB-UniRule"/>
</dbReference>
<dbReference type="FunFam" id="3.40.50.620:FF:000002">
    <property type="entry name" value="Sulfate adenylyltransferase subunit 2"/>
    <property type="match status" value="1"/>
</dbReference>
<dbReference type="Gene3D" id="3.40.50.620">
    <property type="entry name" value="HUPs"/>
    <property type="match status" value="1"/>
</dbReference>
<dbReference type="HAMAP" id="MF_00064">
    <property type="entry name" value="Sulf_adenylyltr_sub2"/>
    <property type="match status" value="1"/>
</dbReference>
<dbReference type="InterPro" id="IPR002500">
    <property type="entry name" value="PAPS_reduct_dom"/>
</dbReference>
<dbReference type="InterPro" id="IPR014729">
    <property type="entry name" value="Rossmann-like_a/b/a_fold"/>
</dbReference>
<dbReference type="InterPro" id="IPR011784">
    <property type="entry name" value="SO4_adenylTrfase_ssu"/>
</dbReference>
<dbReference type="InterPro" id="IPR050128">
    <property type="entry name" value="Sulfate_adenylyltrnsfr_sub2"/>
</dbReference>
<dbReference type="NCBIfam" id="TIGR02039">
    <property type="entry name" value="CysD"/>
    <property type="match status" value="1"/>
</dbReference>
<dbReference type="NCBIfam" id="NF003587">
    <property type="entry name" value="PRK05253.1"/>
    <property type="match status" value="1"/>
</dbReference>
<dbReference type="NCBIfam" id="NF009214">
    <property type="entry name" value="PRK12563.1"/>
    <property type="match status" value="1"/>
</dbReference>
<dbReference type="PANTHER" id="PTHR43196">
    <property type="entry name" value="SULFATE ADENYLYLTRANSFERASE SUBUNIT 2"/>
    <property type="match status" value="1"/>
</dbReference>
<dbReference type="PANTHER" id="PTHR43196:SF1">
    <property type="entry name" value="SULFATE ADENYLYLTRANSFERASE SUBUNIT 2"/>
    <property type="match status" value="1"/>
</dbReference>
<dbReference type="Pfam" id="PF01507">
    <property type="entry name" value="PAPS_reduct"/>
    <property type="match status" value="1"/>
</dbReference>
<dbReference type="PIRSF" id="PIRSF002936">
    <property type="entry name" value="CysDAde_trans"/>
    <property type="match status" value="1"/>
</dbReference>
<dbReference type="SUPFAM" id="SSF52402">
    <property type="entry name" value="Adenine nucleotide alpha hydrolases-like"/>
    <property type="match status" value="1"/>
</dbReference>
<reference key="1">
    <citation type="journal article" date="2004" name="Proc. Natl. Acad. Sci. U.S.A.">
        <title>The complete genomic sequence of Nocardia farcinica IFM 10152.</title>
        <authorList>
            <person name="Ishikawa J."/>
            <person name="Yamashita A."/>
            <person name="Mikami Y."/>
            <person name="Hoshino Y."/>
            <person name="Kurita H."/>
            <person name="Hotta K."/>
            <person name="Shiba T."/>
            <person name="Hattori M."/>
        </authorList>
    </citation>
    <scope>NUCLEOTIDE SEQUENCE [LARGE SCALE GENOMIC DNA]</scope>
    <source>
        <strain>IFM 10152</strain>
    </source>
</reference>
<comment type="function">
    <text evidence="1">With CysN forms the ATP sulfurylase (ATPS) that catalyzes the adenylation of sulfate producing adenosine 5'-phosphosulfate (APS) and diphosphate, the first enzymatic step in sulfur assimilation pathway. APS synthesis involves the formation of a high-energy phosphoric-sulfuric acid anhydride bond driven by GTP hydrolysis by CysN coupled to ATP hydrolysis by CysD.</text>
</comment>
<comment type="catalytic activity">
    <reaction evidence="1">
        <text>sulfate + ATP + H(+) = adenosine 5'-phosphosulfate + diphosphate</text>
        <dbReference type="Rhea" id="RHEA:18133"/>
        <dbReference type="ChEBI" id="CHEBI:15378"/>
        <dbReference type="ChEBI" id="CHEBI:16189"/>
        <dbReference type="ChEBI" id="CHEBI:30616"/>
        <dbReference type="ChEBI" id="CHEBI:33019"/>
        <dbReference type="ChEBI" id="CHEBI:58243"/>
        <dbReference type="EC" id="2.7.7.4"/>
    </reaction>
</comment>
<comment type="pathway">
    <text evidence="1">Sulfur metabolism; hydrogen sulfide biosynthesis; sulfite from sulfate: step 1/3.</text>
</comment>
<comment type="subunit">
    <text evidence="1">Heterodimer composed of CysD, the smaller subunit, and CysN.</text>
</comment>
<comment type="similarity">
    <text evidence="1">Belongs to the PAPS reductase family. CysD subfamily.</text>
</comment>
<organism>
    <name type="scientific">Nocardia farcinica (strain IFM 10152)</name>
    <dbReference type="NCBI Taxonomy" id="247156"/>
    <lineage>
        <taxon>Bacteria</taxon>
        <taxon>Bacillati</taxon>
        <taxon>Actinomycetota</taxon>
        <taxon>Actinomycetes</taxon>
        <taxon>Mycobacteriales</taxon>
        <taxon>Nocardiaceae</taxon>
        <taxon>Nocardia</taxon>
    </lineage>
</organism>
<gene>
    <name evidence="1" type="primary">cysD</name>
    <name type="ordered locus">NFA_33930</name>
</gene>
<sequence>MTTLVHDEHPGLTHLQRLEADSIQIIREAVAESERPVMLYSIGKDSSVLLHLARKAFRPSRLPFPLLHVDTTWKFRAMYAFRDAVAAEPDLDLIVHRNPDCVAQGINPFDHGSALHTQMWKTEGLKQALDQHGFDLAFGGARRDEEKSRAKERVFSIRSAQHRWDPKRQRPELWRLYNASKRPGESVRVFPLSNWTELDIWQYIHREAIPLVPLYFAALRPVVERDGTLIMVDDDRMRLDPGEVPQERMVRFRTLGCYPLSGAIPSTATTVPEVVQEMLLTTSSERQGRIIDHDGSASMEKKKQEGYF</sequence>
<evidence type="ECO:0000255" key="1">
    <source>
        <dbReference type="HAMAP-Rule" id="MF_00064"/>
    </source>
</evidence>
<evidence type="ECO:0000256" key="2">
    <source>
        <dbReference type="SAM" id="MobiDB-lite"/>
    </source>
</evidence>